<keyword id="KW-0067">ATP-binding</keyword>
<keyword id="KW-0997">Cell inner membrane</keyword>
<keyword id="KW-1003">Cell membrane</keyword>
<keyword id="KW-0472">Membrane</keyword>
<keyword id="KW-0536">Nodulation</keyword>
<keyword id="KW-0547">Nucleotide-binding</keyword>
<keyword id="KW-0614">Plasmid</keyword>
<keyword id="KW-1185">Reference proteome</keyword>
<keyword id="KW-1278">Translocase</keyword>
<keyword id="KW-0813">Transport</keyword>
<accession>Q8KLG1</accession>
<geneLocation type="plasmid">
    <name>sym p42d</name>
</geneLocation>
<evidence type="ECO:0000255" key="1">
    <source>
        <dbReference type="HAMAP-Rule" id="MF_01704"/>
    </source>
</evidence>
<evidence type="ECO:0000305" key="2"/>
<feature type="chain" id="PRO_0000272605" description="Nod factor export ATP-binding protein I">
    <location>
        <begin position="1"/>
        <end position="316"/>
    </location>
</feature>
<feature type="domain" description="ABC transporter" evidence="1">
    <location>
        <begin position="18"/>
        <end position="248"/>
    </location>
</feature>
<feature type="binding site" evidence="1">
    <location>
        <begin position="50"/>
        <end position="57"/>
    </location>
    <ligand>
        <name>ATP</name>
        <dbReference type="ChEBI" id="CHEBI:30616"/>
    </ligand>
</feature>
<protein>
    <recommendedName>
        <fullName evidence="1">Nod factor export ATP-binding protein I</fullName>
        <ecNumber evidence="1">7.6.2.-</ecNumber>
    </recommendedName>
    <alternativeName>
        <fullName evidence="1">Nodulation ATP-binding protein I</fullName>
    </alternativeName>
</protein>
<reference key="1">
    <citation type="journal article" date="2003" name="Genome Biol.">
        <title>The mosaic structure of the symbiotic plasmid of Rhizobium etli CFN42 and its relation to other symbiotic genome compartments.</title>
        <authorList>
            <person name="Gonzalez V."/>
            <person name="Bustos P."/>
            <person name="Ramirez-Romero M.A."/>
            <person name="Medrano-Soto A."/>
            <person name="Salgado H."/>
            <person name="Hernandez-Gonzalez I."/>
            <person name="Hernandez-Celis J.C."/>
            <person name="Quintero V."/>
            <person name="Moreno-Hagelsieb G."/>
            <person name="Girard L."/>
            <person name="Rodriguez O."/>
            <person name="Flores M."/>
            <person name="Cevallos M.A."/>
            <person name="Collado-Vides J."/>
            <person name="Romero D."/>
            <person name="Davila G."/>
        </authorList>
    </citation>
    <scope>NUCLEOTIDE SEQUENCE [LARGE SCALE GENOMIC DNA]</scope>
    <source>
        <strain>ATCC 51251 / DSM 11541 / JCM 21823 / NBRC 15573 / CFN 42</strain>
    </source>
</reference>
<reference key="2">
    <citation type="journal article" date="2006" name="Proc. Natl. Acad. Sci. U.S.A.">
        <title>The partitioned Rhizobium etli genome: genetic and metabolic redundancy in seven interacting replicons.</title>
        <authorList>
            <person name="Gonzalez V."/>
            <person name="Santamaria R.I."/>
            <person name="Bustos P."/>
            <person name="Hernandez-Gonzalez I."/>
            <person name="Medrano-Soto A."/>
            <person name="Moreno-Hagelsieb G."/>
            <person name="Janga S.C."/>
            <person name="Ramirez M.A."/>
            <person name="Jimenez-Jacinto V."/>
            <person name="Collado-Vides J."/>
            <person name="Davila G."/>
        </authorList>
    </citation>
    <scope>NUCLEOTIDE SEQUENCE [LARGE SCALE GENOMIC DNA]</scope>
    <source>
        <strain>ATCC 51251 / DSM 11541 / JCM 21823 / NBRC 15573 / CFN 42</strain>
    </source>
</reference>
<gene>
    <name evidence="1" type="primary">nodI</name>
    <name type="ordered locus">RHE_PD00278</name>
</gene>
<organism>
    <name type="scientific">Rhizobium etli (strain ATCC 51251 / DSM 11541 / JCM 21823 / NBRC 15573 / CFN 42)</name>
    <dbReference type="NCBI Taxonomy" id="347834"/>
    <lineage>
        <taxon>Bacteria</taxon>
        <taxon>Pseudomonadati</taxon>
        <taxon>Pseudomonadota</taxon>
        <taxon>Alphaproteobacteria</taxon>
        <taxon>Hyphomicrobiales</taxon>
        <taxon>Rhizobiaceae</taxon>
        <taxon>Rhizobium/Agrobacterium group</taxon>
        <taxon>Rhizobium</taxon>
    </lineage>
</organism>
<comment type="function">
    <text evidence="1">Part of the ABC transporter complex NodIJ involved in the export of the nodulation factors (Nod factors), the bacterial signal molecules that induce symbiosis and subsequent nodulation induction. Nod factors are LCO (lipo-chitin oligosaccharide), a modified beta-1,4-linked N-acetylglucosamine oligosaccharide. This subunit is responsible for energy coupling to the transport system.</text>
</comment>
<comment type="subunit">
    <text evidence="1">The complex is composed of two ATP-binding proteins (NodI) and two transmembrane proteins (NodJ).</text>
</comment>
<comment type="subcellular location">
    <subcellularLocation>
        <location evidence="1">Cell inner membrane</location>
        <topology evidence="1">Peripheral membrane protein</topology>
    </subcellularLocation>
</comment>
<comment type="similarity">
    <text evidence="1">Belongs to the ABC transporter superfamily. Lipooligosaccharide exporter (TC 3.A.1.102) family.</text>
</comment>
<comment type="sequence caution" evidence="2">
    <conflict type="erroneous initiation">
        <sequence resource="EMBL-CDS" id="AAM54777"/>
    </conflict>
</comment>
<dbReference type="EC" id="7.6.2.-" evidence="1"/>
<dbReference type="EMBL" id="U80928">
    <property type="protein sequence ID" value="AAM54777.2"/>
    <property type="status" value="ALT_INIT"/>
    <property type="molecule type" value="Genomic_DNA"/>
</dbReference>
<dbReference type="RefSeq" id="WP_016737487.1">
    <property type="nucleotide sequence ID" value="NC_004041.2"/>
</dbReference>
<dbReference type="SMR" id="Q8KLG1"/>
<dbReference type="GeneID" id="45960623"/>
<dbReference type="KEGG" id="ret:RHE_PD00278"/>
<dbReference type="HOGENOM" id="CLU_000604_1_2_5"/>
<dbReference type="OrthoDB" id="9778547at2"/>
<dbReference type="Proteomes" id="UP000001936">
    <property type="component" value="Plasmid p42d"/>
</dbReference>
<dbReference type="GO" id="GO:0005886">
    <property type="term" value="C:plasma membrane"/>
    <property type="evidence" value="ECO:0007669"/>
    <property type="project" value="UniProtKB-SubCell"/>
</dbReference>
<dbReference type="GO" id="GO:0005524">
    <property type="term" value="F:ATP binding"/>
    <property type="evidence" value="ECO:0007669"/>
    <property type="project" value="UniProtKB-KW"/>
</dbReference>
<dbReference type="GO" id="GO:0016887">
    <property type="term" value="F:ATP hydrolysis activity"/>
    <property type="evidence" value="ECO:0007669"/>
    <property type="project" value="InterPro"/>
</dbReference>
<dbReference type="GO" id="GO:0022857">
    <property type="term" value="F:transmembrane transporter activity"/>
    <property type="evidence" value="ECO:0007669"/>
    <property type="project" value="InterPro"/>
</dbReference>
<dbReference type="CDD" id="cd03263">
    <property type="entry name" value="ABC_subfamily_A"/>
    <property type="match status" value="1"/>
</dbReference>
<dbReference type="FunFam" id="3.40.50.300:FF:000589">
    <property type="entry name" value="ABC transporter, ATP-binding subunit"/>
    <property type="match status" value="1"/>
</dbReference>
<dbReference type="Gene3D" id="3.40.50.300">
    <property type="entry name" value="P-loop containing nucleotide triphosphate hydrolases"/>
    <property type="match status" value="1"/>
</dbReference>
<dbReference type="InterPro" id="IPR003593">
    <property type="entry name" value="AAA+_ATPase"/>
</dbReference>
<dbReference type="InterPro" id="IPR003439">
    <property type="entry name" value="ABC_transporter-like_ATP-bd"/>
</dbReference>
<dbReference type="InterPro" id="IPR017871">
    <property type="entry name" value="ABC_transporter-like_CS"/>
</dbReference>
<dbReference type="InterPro" id="IPR050763">
    <property type="entry name" value="ABC_transporter_ATP-binding"/>
</dbReference>
<dbReference type="InterPro" id="IPR005978">
    <property type="entry name" value="ABC_transptNodI"/>
</dbReference>
<dbReference type="InterPro" id="IPR027417">
    <property type="entry name" value="P-loop_NTPase"/>
</dbReference>
<dbReference type="NCBIfam" id="TIGR01288">
    <property type="entry name" value="nodI"/>
    <property type="match status" value="1"/>
</dbReference>
<dbReference type="NCBIfam" id="NF010059">
    <property type="entry name" value="PRK13536.1"/>
    <property type="match status" value="1"/>
</dbReference>
<dbReference type="NCBIfam" id="NF010060">
    <property type="entry name" value="PRK13537.1"/>
    <property type="match status" value="1"/>
</dbReference>
<dbReference type="PANTHER" id="PTHR42711">
    <property type="entry name" value="ABC TRANSPORTER ATP-BINDING PROTEIN"/>
    <property type="match status" value="1"/>
</dbReference>
<dbReference type="PANTHER" id="PTHR42711:SF5">
    <property type="entry name" value="ABC TRANSPORTER ATP-BINDING PROTEIN NATA"/>
    <property type="match status" value="1"/>
</dbReference>
<dbReference type="Pfam" id="PF00005">
    <property type="entry name" value="ABC_tran"/>
    <property type="match status" value="1"/>
</dbReference>
<dbReference type="SMART" id="SM00382">
    <property type="entry name" value="AAA"/>
    <property type="match status" value="1"/>
</dbReference>
<dbReference type="SUPFAM" id="SSF52540">
    <property type="entry name" value="P-loop containing nucleoside triphosphate hydrolases"/>
    <property type="match status" value="1"/>
</dbReference>
<dbReference type="PROSITE" id="PS00211">
    <property type="entry name" value="ABC_TRANSPORTER_1"/>
    <property type="match status" value="1"/>
</dbReference>
<dbReference type="PROSITE" id="PS50893">
    <property type="entry name" value="ABC_TRANSPORTER_2"/>
    <property type="match status" value="1"/>
</dbReference>
<dbReference type="PROSITE" id="PS51240">
    <property type="entry name" value="NODI"/>
    <property type="match status" value="1"/>
</dbReference>
<proteinExistence type="inferred from homology"/>
<sequence>MPVNGARRSDERMFMTAIDFSDVSKTYGDKAVVSALSFRVSPGECFGLLGPNGAGKSTIARMILGMTAPDAGKITVLGVPVPAQARLARKGIGVVPQFDNLEPEFTVRENLLVYSRYFGMNTRKVEAVMSSLLEFARLESKVNARVSELSGGMKRRLTLARALINDPQLLVMDEPTTGLDPHARHLIWERLRSLLTRGKTIILTTHFMEEAERLCDRLCVLEGGRSIAEGRPHDLIDELIGCEVIEIYGGDPHELESLVGPYADRIEISGETLFCYVSDPEQVRVRLRQRAGLRILQRPPNLEDVFLRLTGREMEK</sequence>
<name>NODI_RHIEC</name>